<proteinExistence type="inferred from homology"/>
<reference key="1">
    <citation type="submission" date="2007-05" db="EMBL/GenBank/DDBJ databases">
        <title>Complete sequence of Pseudomonas putida F1.</title>
        <authorList>
            <consortium name="US DOE Joint Genome Institute"/>
            <person name="Copeland A."/>
            <person name="Lucas S."/>
            <person name="Lapidus A."/>
            <person name="Barry K."/>
            <person name="Detter J.C."/>
            <person name="Glavina del Rio T."/>
            <person name="Hammon N."/>
            <person name="Israni S."/>
            <person name="Dalin E."/>
            <person name="Tice H."/>
            <person name="Pitluck S."/>
            <person name="Chain P."/>
            <person name="Malfatti S."/>
            <person name="Shin M."/>
            <person name="Vergez L."/>
            <person name="Schmutz J."/>
            <person name="Larimer F."/>
            <person name="Land M."/>
            <person name="Hauser L."/>
            <person name="Kyrpides N."/>
            <person name="Lykidis A."/>
            <person name="Parales R."/>
            <person name="Richardson P."/>
        </authorList>
    </citation>
    <scope>NUCLEOTIDE SEQUENCE [LARGE SCALE GENOMIC DNA]</scope>
    <source>
        <strain>ATCC 700007 / DSM 6899 / JCM 31910 / BCRC 17059 / LMG 24140 / F1</strain>
    </source>
</reference>
<organism>
    <name type="scientific">Pseudomonas putida (strain ATCC 700007 / DSM 6899 / JCM 31910 / BCRC 17059 / LMG 24140 / F1)</name>
    <dbReference type="NCBI Taxonomy" id="351746"/>
    <lineage>
        <taxon>Bacteria</taxon>
        <taxon>Pseudomonadati</taxon>
        <taxon>Pseudomonadota</taxon>
        <taxon>Gammaproteobacteria</taxon>
        <taxon>Pseudomonadales</taxon>
        <taxon>Pseudomonadaceae</taxon>
        <taxon>Pseudomonas</taxon>
    </lineage>
</organism>
<evidence type="ECO:0000255" key="1">
    <source>
        <dbReference type="HAMAP-Rule" id="MF_00022"/>
    </source>
</evidence>
<dbReference type="EC" id="6.1.1.17" evidence="1"/>
<dbReference type="EMBL" id="CP000712">
    <property type="protein sequence ID" value="ABQ79907.1"/>
    <property type="molecule type" value="Genomic_DNA"/>
</dbReference>
<dbReference type="SMR" id="A5W6Z7"/>
<dbReference type="KEGG" id="ppf:Pput_3783"/>
<dbReference type="eggNOG" id="COG0008">
    <property type="taxonomic scope" value="Bacteria"/>
</dbReference>
<dbReference type="HOGENOM" id="CLU_015768_6_3_6"/>
<dbReference type="GO" id="GO:0005829">
    <property type="term" value="C:cytosol"/>
    <property type="evidence" value="ECO:0007669"/>
    <property type="project" value="TreeGrafter"/>
</dbReference>
<dbReference type="GO" id="GO:0005524">
    <property type="term" value="F:ATP binding"/>
    <property type="evidence" value="ECO:0007669"/>
    <property type="project" value="UniProtKB-UniRule"/>
</dbReference>
<dbReference type="GO" id="GO:0004818">
    <property type="term" value="F:glutamate-tRNA ligase activity"/>
    <property type="evidence" value="ECO:0007669"/>
    <property type="project" value="UniProtKB-UniRule"/>
</dbReference>
<dbReference type="GO" id="GO:0000049">
    <property type="term" value="F:tRNA binding"/>
    <property type="evidence" value="ECO:0007669"/>
    <property type="project" value="InterPro"/>
</dbReference>
<dbReference type="GO" id="GO:0008270">
    <property type="term" value="F:zinc ion binding"/>
    <property type="evidence" value="ECO:0007669"/>
    <property type="project" value="InterPro"/>
</dbReference>
<dbReference type="GO" id="GO:0006424">
    <property type="term" value="P:glutamyl-tRNA aminoacylation"/>
    <property type="evidence" value="ECO:0007669"/>
    <property type="project" value="UniProtKB-UniRule"/>
</dbReference>
<dbReference type="CDD" id="cd00808">
    <property type="entry name" value="GluRS_core"/>
    <property type="match status" value="1"/>
</dbReference>
<dbReference type="FunFam" id="1.10.10.350:FF:000007">
    <property type="entry name" value="Glutamate--tRNA ligase"/>
    <property type="match status" value="1"/>
</dbReference>
<dbReference type="FunFam" id="3.40.50.620:FF:000045">
    <property type="entry name" value="Glutamate--tRNA ligase, mitochondrial"/>
    <property type="match status" value="1"/>
</dbReference>
<dbReference type="Gene3D" id="1.10.10.350">
    <property type="match status" value="1"/>
</dbReference>
<dbReference type="Gene3D" id="3.40.50.620">
    <property type="entry name" value="HUPs"/>
    <property type="match status" value="1"/>
</dbReference>
<dbReference type="HAMAP" id="MF_00022">
    <property type="entry name" value="Glu_tRNA_synth_type1"/>
    <property type="match status" value="1"/>
</dbReference>
<dbReference type="InterPro" id="IPR045462">
    <property type="entry name" value="aa-tRNA-synth_I_cd-bd"/>
</dbReference>
<dbReference type="InterPro" id="IPR020751">
    <property type="entry name" value="aa-tRNA-synth_I_codon-bd_sub2"/>
</dbReference>
<dbReference type="InterPro" id="IPR001412">
    <property type="entry name" value="aa-tRNA-synth_I_CS"/>
</dbReference>
<dbReference type="InterPro" id="IPR008925">
    <property type="entry name" value="aa_tRNA-synth_I_cd-bd_sf"/>
</dbReference>
<dbReference type="InterPro" id="IPR004527">
    <property type="entry name" value="Glu-tRNA-ligase_bac/mito"/>
</dbReference>
<dbReference type="InterPro" id="IPR000924">
    <property type="entry name" value="Glu/Gln-tRNA-synth"/>
</dbReference>
<dbReference type="InterPro" id="IPR020058">
    <property type="entry name" value="Glu/Gln-tRNA-synth_Ib_cat-dom"/>
</dbReference>
<dbReference type="InterPro" id="IPR049940">
    <property type="entry name" value="GluQ/Sye"/>
</dbReference>
<dbReference type="InterPro" id="IPR033910">
    <property type="entry name" value="GluRS_core"/>
</dbReference>
<dbReference type="InterPro" id="IPR014729">
    <property type="entry name" value="Rossmann-like_a/b/a_fold"/>
</dbReference>
<dbReference type="NCBIfam" id="TIGR00464">
    <property type="entry name" value="gltX_bact"/>
    <property type="match status" value="1"/>
</dbReference>
<dbReference type="PANTHER" id="PTHR43311">
    <property type="entry name" value="GLUTAMATE--TRNA LIGASE"/>
    <property type="match status" value="1"/>
</dbReference>
<dbReference type="PANTHER" id="PTHR43311:SF2">
    <property type="entry name" value="GLUTAMATE--TRNA LIGASE, MITOCHONDRIAL-RELATED"/>
    <property type="match status" value="1"/>
</dbReference>
<dbReference type="Pfam" id="PF19269">
    <property type="entry name" value="Anticodon_2"/>
    <property type="match status" value="1"/>
</dbReference>
<dbReference type="Pfam" id="PF00749">
    <property type="entry name" value="tRNA-synt_1c"/>
    <property type="match status" value="1"/>
</dbReference>
<dbReference type="PRINTS" id="PR00987">
    <property type="entry name" value="TRNASYNTHGLU"/>
</dbReference>
<dbReference type="SUPFAM" id="SSF48163">
    <property type="entry name" value="An anticodon-binding domain of class I aminoacyl-tRNA synthetases"/>
    <property type="match status" value="1"/>
</dbReference>
<dbReference type="SUPFAM" id="SSF52374">
    <property type="entry name" value="Nucleotidylyl transferase"/>
    <property type="match status" value="1"/>
</dbReference>
<dbReference type="PROSITE" id="PS00178">
    <property type="entry name" value="AA_TRNA_LIGASE_I"/>
    <property type="match status" value="1"/>
</dbReference>
<protein>
    <recommendedName>
        <fullName evidence="1">Glutamate--tRNA ligase</fullName>
        <ecNumber evidence="1">6.1.1.17</ecNumber>
    </recommendedName>
    <alternativeName>
        <fullName evidence="1">Glutamyl-tRNA synthetase</fullName>
        <shortName evidence="1">GluRS</shortName>
    </alternativeName>
</protein>
<keyword id="KW-0030">Aminoacyl-tRNA synthetase</keyword>
<keyword id="KW-0067">ATP-binding</keyword>
<keyword id="KW-0963">Cytoplasm</keyword>
<keyword id="KW-0436">Ligase</keyword>
<keyword id="KW-0547">Nucleotide-binding</keyword>
<keyword id="KW-0648">Protein biosynthesis</keyword>
<gene>
    <name evidence="1" type="primary">gltX</name>
    <name type="ordered locus">Pput_3783</name>
</gene>
<comment type="function">
    <text evidence="1">Catalyzes the attachment of glutamate to tRNA(Glu) in a two-step reaction: glutamate is first activated by ATP to form Glu-AMP and then transferred to the acceptor end of tRNA(Glu).</text>
</comment>
<comment type="catalytic activity">
    <reaction evidence="1">
        <text>tRNA(Glu) + L-glutamate + ATP = L-glutamyl-tRNA(Glu) + AMP + diphosphate</text>
        <dbReference type="Rhea" id="RHEA:23540"/>
        <dbReference type="Rhea" id="RHEA-COMP:9663"/>
        <dbReference type="Rhea" id="RHEA-COMP:9680"/>
        <dbReference type="ChEBI" id="CHEBI:29985"/>
        <dbReference type="ChEBI" id="CHEBI:30616"/>
        <dbReference type="ChEBI" id="CHEBI:33019"/>
        <dbReference type="ChEBI" id="CHEBI:78442"/>
        <dbReference type="ChEBI" id="CHEBI:78520"/>
        <dbReference type="ChEBI" id="CHEBI:456215"/>
        <dbReference type="EC" id="6.1.1.17"/>
    </reaction>
</comment>
<comment type="subunit">
    <text evidence="1">Monomer.</text>
</comment>
<comment type="subcellular location">
    <subcellularLocation>
        <location evidence="1">Cytoplasm</location>
    </subcellularLocation>
</comment>
<comment type="similarity">
    <text evidence="1">Belongs to the class-I aminoacyl-tRNA synthetase family. Glutamate--tRNA ligase type 1 subfamily.</text>
</comment>
<name>SYE_PSEP1</name>
<sequence length="493" mass="56451">MTTVRTRIAPSPTGDPHVGTAYIALFNYCFAKQHGGEFILRIEDTDQLRSTRESEQQIFDALRWLGIEWNEGPDVGGPHGPYRQSERGEIYAKYAKELVDAGHAFYCFCTAEELEQMRAEQQARGETPRYDGRALLLSAEEVQRRLDAGEPHVIRMKVPSEGICVVPDMLRGDVEIPWDRMDMQVLMKNDGLPTYFLANVVDDHLMGITHVLRGEEWLPSAPKLIKLYEYFGWEQPKLCYMPLLRNPDKSKLSKRKNPTSVTFYERMGFMPEAMLNYLGRMGWSMPDEREKFSLAEMVEHFDLSRISLGGPIFDIEKLSWLNGQWLRELPVEEFAARLQKWAFNSDYMMKIAPHVQGRVETFSQVAPLGGFFFEGALKLDAKLFESKKLSADQVRQVIQLILWKLESLRQWEKERITGCIQAVVEALELKLRDAMPLMFAAITGQASSVSVLDAMEILGPDLTRYRLRQALDLLGGVSKKENKEWEKLLASIG</sequence>
<feature type="chain" id="PRO_1000001941" description="Glutamate--tRNA ligase">
    <location>
        <begin position="1"/>
        <end position="493"/>
    </location>
</feature>
<feature type="short sequence motif" description="'HIGH' region" evidence="1">
    <location>
        <begin position="10"/>
        <end position="20"/>
    </location>
</feature>
<feature type="short sequence motif" description="'KMSKS' region" evidence="1">
    <location>
        <begin position="251"/>
        <end position="255"/>
    </location>
</feature>
<feature type="binding site" evidence="1">
    <location>
        <position position="254"/>
    </location>
    <ligand>
        <name>ATP</name>
        <dbReference type="ChEBI" id="CHEBI:30616"/>
    </ligand>
</feature>
<accession>A5W6Z7</accession>